<protein>
    <recommendedName>
        <fullName evidence="1">Glycogen synthase</fullName>
        <ecNumber evidence="1">2.4.1.21</ecNumber>
    </recommendedName>
    <alternativeName>
        <fullName evidence="1">Starch [bacterial glycogen] synthase</fullName>
    </alternativeName>
</protein>
<feature type="chain" id="PRO_1000014342" description="Glycogen synthase">
    <location>
        <begin position="1"/>
        <end position="483"/>
    </location>
</feature>
<feature type="binding site" evidence="1">
    <location>
        <position position="15"/>
    </location>
    <ligand>
        <name>ADP-alpha-D-glucose</name>
        <dbReference type="ChEBI" id="CHEBI:57498"/>
    </ligand>
</feature>
<accession>Q0AA27</accession>
<gene>
    <name evidence="1" type="primary">glgA</name>
    <name type="ordered locus">Mlg_0957</name>
</gene>
<name>GLGA_ALKEH</name>
<proteinExistence type="inferred from homology"/>
<evidence type="ECO:0000255" key="1">
    <source>
        <dbReference type="HAMAP-Rule" id="MF_00484"/>
    </source>
</evidence>
<keyword id="KW-0320">Glycogen biosynthesis</keyword>
<keyword id="KW-0328">Glycosyltransferase</keyword>
<keyword id="KW-1185">Reference proteome</keyword>
<keyword id="KW-0808">Transferase</keyword>
<dbReference type="EC" id="2.4.1.21" evidence="1"/>
<dbReference type="EMBL" id="CP000453">
    <property type="protein sequence ID" value="ABI56310.1"/>
    <property type="molecule type" value="Genomic_DNA"/>
</dbReference>
<dbReference type="RefSeq" id="WP_011628705.1">
    <property type="nucleotide sequence ID" value="NC_008340.1"/>
</dbReference>
<dbReference type="SMR" id="Q0AA27"/>
<dbReference type="CAZy" id="GT5">
    <property type="family name" value="Glycosyltransferase Family 5"/>
</dbReference>
<dbReference type="KEGG" id="aeh:Mlg_0957"/>
<dbReference type="eggNOG" id="COG0297">
    <property type="taxonomic scope" value="Bacteria"/>
</dbReference>
<dbReference type="HOGENOM" id="CLU_009583_18_2_6"/>
<dbReference type="OrthoDB" id="9808590at2"/>
<dbReference type="UniPathway" id="UPA00164"/>
<dbReference type="Proteomes" id="UP000001962">
    <property type="component" value="Chromosome"/>
</dbReference>
<dbReference type="GO" id="GO:0005829">
    <property type="term" value="C:cytosol"/>
    <property type="evidence" value="ECO:0007669"/>
    <property type="project" value="TreeGrafter"/>
</dbReference>
<dbReference type="GO" id="GO:0009011">
    <property type="term" value="F:alpha-1,4-glucan glucosyltransferase (ADP-glucose donor) activity"/>
    <property type="evidence" value="ECO:0007669"/>
    <property type="project" value="UniProtKB-UniRule"/>
</dbReference>
<dbReference type="GO" id="GO:0004373">
    <property type="term" value="F:alpha-1,4-glucan glucosyltransferase (UDP-glucose donor) activity"/>
    <property type="evidence" value="ECO:0007669"/>
    <property type="project" value="InterPro"/>
</dbReference>
<dbReference type="GO" id="GO:0005978">
    <property type="term" value="P:glycogen biosynthetic process"/>
    <property type="evidence" value="ECO:0007669"/>
    <property type="project" value="UniProtKB-UniRule"/>
</dbReference>
<dbReference type="CDD" id="cd03791">
    <property type="entry name" value="GT5_Glycogen_synthase_DULL1-like"/>
    <property type="match status" value="1"/>
</dbReference>
<dbReference type="Gene3D" id="3.40.50.2000">
    <property type="entry name" value="Glycogen Phosphorylase B"/>
    <property type="match status" value="2"/>
</dbReference>
<dbReference type="HAMAP" id="MF_00484">
    <property type="entry name" value="Glycogen_synth"/>
    <property type="match status" value="1"/>
</dbReference>
<dbReference type="InterPro" id="IPR001296">
    <property type="entry name" value="Glyco_trans_1"/>
</dbReference>
<dbReference type="InterPro" id="IPR011835">
    <property type="entry name" value="GS/SS"/>
</dbReference>
<dbReference type="InterPro" id="IPR013534">
    <property type="entry name" value="Starch_synth_cat_dom"/>
</dbReference>
<dbReference type="NCBIfam" id="TIGR02095">
    <property type="entry name" value="glgA"/>
    <property type="match status" value="1"/>
</dbReference>
<dbReference type="NCBIfam" id="NF001899">
    <property type="entry name" value="PRK00654.1-2"/>
    <property type="match status" value="1"/>
</dbReference>
<dbReference type="PANTHER" id="PTHR45825:SF11">
    <property type="entry name" value="ALPHA AMYLASE DOMAIN-CONTAINING PROTEIN"/>
    <property type="match status" value="1"/>
</dbReference>
<dbReference type="PANTHER" id="PTHR45825">
    <property type="entry name" value="GRANULE-BOUND STARCH SYNTHASE 1, CHLOROPLASTIC/AMYLOPLASTIC"/>
    <property type="match status" value="1"/>
</dbReference>
<dbReference type="Pfam" id="PF08323">
    <property type="entry name" value="Glyco_transf_5"/>
    <property type="match status" value="1"/>
</dbReference>
<dbReference type="Pfam" id="PF00534">
    <property type="entry name" value="Glycos_transf_1"/>
    <property type="match status" value="1"/>
</dbReference>
<dbReference type="SUPFAM" id="SSF53756">
    <property type="entry name" value="UDP-Glycosyltransferase/glycogen phosphorylase"/>
    <property type="match status" value="1"/>
</dbReference>
<reference key="1">
    <citation type="submission" date="2006-08" db="EMBL/GenBank/DDBJ databases">
        <title>Complete sequence of Alkalilimnicola ehrilichei MLHE-1.</title>
        <authorList>
            <person name="Copeland A."/>
            <person name="Lucas S."/>
            <person name="Lapidus A."/>
            <person name="Barry K."/>
            <person name="Detter J.C."/>
            <person name="Glavina del Rio T."/>
            <person name="Hammon N."/>
            <person name="Israni S."/>
            <person name="Dalin E."/>
            <person name="Tice H."/>
            <person name="Pitluck S."/>
            <person name="Sims D."/>
            <person name="Brettin T."/>
            <person name="Bruce D."/>
            <person name="Han C."/>
            <person name="Tapia R."/>
            <person name="Gilna P."/>
            <person name="Schmutz J."/>
            <person name="Larimer F."/>
            <person name="Land M."/>
            <person name="Hauser L."/>
            <person name="Kyrpides N."/>
            <person name="Mikhailova N."/>
            <person name="Oremland R.S."/>
            <person name="Hoeft S.E."/>
            <person name="Switzer-Blum J."/>
            <person name="Kulp T."/>
            <person name="King G."/>
            <person name="Tabita R."/>
            <person name="Witte B."/>
            <person name="Santini J.M."/>
            <person name="Basu P."/>
            <person name="Hollibaugh J.T."/>
            <person name="Xie G."/>
            <person name="Stolz J.F."/>
            <person name="Richardson P."/>
        </authorList>
    </citation>
    <scope>NUCLEOTIDE SEQUENCE [LARGE SCALE GENOMIC DNA]</scope>
    <source>
        <strain>ATCC BAA-1101 / DSM 17681 / MLHE-1</strain>
    </source>
</reference>
<sequence>MKILFTASEAWPLVKTGGLGDVAHGLTHALRERRHDVRLLLPAHPDAVAGLEGRIRRHALTLDQRPFTLIEGRLPGTRVTTWLLDDPPLFARAGNPYTTEDGDPWPDNARRYHRLSRVAAALAAGELLPWQAAVLHAHDWQTALAPFLLQRRPVPRPATVFTIHNLAYRGLFPAETHTRLGLPPEAWTPEGLEFHGRLAFIKGGLAYADAITTVSPTYAREIQTPAFGCGLDGLLRHRSGVLHGIVNGIDTTVWNPAADPHLAACYRKPDPAARAANRAALAQRIGLDGDTGERSGPLLGFVGRLVEQKGVDLILAALPRLLAGGARLALLGSGERELEEALRQAARHYPGRVGVHIGYDEGLAHLIEGGCDLFLMPSRFEPCGLNQLYSLRYGTPPVVTATGGLADTVMDVDTDPTAGNGFHLPAANAGALAATVERATAHWRRPAAWKRIQARGMGGDYSWDASAEAYLRLYRNTPGNNGS</sequence>
<organism>
    <name type="scientific">Alkalilimnicola ehrlichii (strain ATCC BAA-1101 / DSM 17681 / MLHE-1)</name>
    <dbReference type="NCBI Taxonomy" id="187272"/>
    <lineage>
        <taxon>Bacteria</taxon>
        <taxon>Pseudomonadati</taxon>
        <taxon>Pseudomonadota</taxon>
        <taxon>Gammaproteobacteria</taxon>
        <taxon>Chromatiales</taxon>
        <taxon>Ectothiorhodospiraceae</taxon>
        <taxon>Alkalilimnicola</taxon>
    </lineage>
</organism>
<comment type="function">
    <text evidence="1">Synthesizes alpha-1,4-glucan chains using ADP-glucose.</text>
</comment>
<comment type="catalytic activity">
    <reaction evidence="1">
        <text>[(1-&gt;4)-alpha-D-glucosyl](n) + ADP-alpha-D-glucose = [(1-&gt;4)-alpha-D-glucosyl](n+1) + ADP + H(+)</text>
        <dbReference type="Rhea" id="RHEA:18189"/>
        <dbReference type="Rhea" id="RHEA-COMP:9584"/>
        <dbReference type="Rhea" id="RHEA-COMP:9587"/>
        <dbReference type="ChEBI" id="CHEBI:15378"/>
        <dbReference type="ChEBI" id="CHEBI:15444"/>
        <dbReference type="ChEBI" id="CHEBI:57498"/>
        <dbReference type="ChEBI" id="CHEBI:456216"/>
        <dbReference type="EC" id="2.4.1.21"/>
    </reaction>
</comment>
<comment type="pathway">
    <text evidence="1">Glycan biosynthesis; glycogen biosynthesis.</text>
</comment>
<comment type="similarity">
    <text evidence="1">Belongs to the glycosyltransferase 1 family. Bacterial/plant glycogen synthase subfamily.</text>
</comment>